<evidence type="ECO:0000255" key="1">
    <source>
        <dbReference type="HAMAP-Rule" id="MF_00262"/>
    </source>
</evidence>
<organism>
    <name type="scientific">Chelativorans sp. (strain BNC1)</name>
    <dbReference type="NCBI Taxonomy" id="266779"/>
    <lineage>
        <taxon>Bacteria</taxon>
        <taxon>Pseudomonadati</taxon>
        <taxon>Pseudomonadota</taxon>
        <taxon>Alphaproteobacteria</taxon>
        <taxon>Hyphomicrobiales</taxon>
        <taxon>Phyllobacteriaceae</taxon>
        <taxon>Chelativorans</taxon>
    </lineage>
</organism>
<sequence length="87" mass="9626">MKIFGFFGKRASAPMARERLQVLLAHERASLGKSDLVAILREEIIAVIAKHIQVDSEKVNVKMDRDEKVSTLEIDVEIPLQAGGRAA</sequence>
<accession>Q11LK0</accession>
<proteinExistence type="inferred from homology"/>
<name>MINE_CHESB</name>
<reference key="1">
    <citation type="submission" date="2006-06" db="EMBL/GenBank/DDBJ databases">
        <title>Complete sequence of chromosome of Mesorhizobium sp. BNC1.</title>
        <authorList>
            <consortium name="US DOE Joint Genome Institute"/>
            <person name="Copeland A."/>
            <person name="Lucas S."/>
            <person name="Lapidus A."/>
            <person name="Barry K."/>
            <person name="Detter J.C."/>
            <person name="Glavina del Rio T."/>
            <person name="Hammon N."/>
            <person name="Israni S."/>
            <person name="Dalin E."/>
            <person name="Tice H."/>
            <person name="Pitluck S."/>
            <person name="Chertkov O."/>
            <person name="Brettin T."/>
            <person name="Bruce D."/>
            <person name="Han C."/>
            <person name="Tapia R."/>
            <person name="Gilna P."/>
            <person name="Schmutz J."/>
            <person name="Larimer F."/>
            <person name="Land M."/>
            <person name="Hauser L."/>
            <person name="Kyrpides N."/>
            <person name="Mikhailova N."/>
            <person name="Richardson P."/>
        </authorList>
    </citation>
    <scope>NUCLEOTIDE SEQUENCE [LARGE SCALE GENOMIC DNA]</scope>
    <source>
        <strain>BNC1</strain>
    </source>
</reference>
<protein>
    <recommendedName>
        <fullName evidence="1">Cell division topological specificity factor</fullName>
    </recommendedName>
</protein>
<gene>
    <name evidence="1" type="primary">minE</name>
    <name type="ordered locus">Meso_0321</name>
</gene>
<comment type="function">
    <text evidence="1">Prevents the cell division inhibition by proteins MinC and MinD at internal division sites while permitting inhibition at polar sites. This ensures cell division at the proper site by restricting the formation of a division septum at the midpoint of the long axis of the cell.</text>
</comment>
<comment type="similarity">
    <text evidence="1">Belongs to the MinE family.</text>
</comment>
<feature type="chain" id="PRO_0000298133" description="Cell division topological specificity factor">
    <location>
        <begin position="1"/>
        <end position="87"/>
    </location>
</feature>
<keyword id="KW-0131">Cell cycle</keyword>
<keyword id="KW-0132">Cell division</keyword>
<dbReference type="EMBL" id="CP000390">
    <property type="protein sequence ID" value="ABG61725.1"/>
    <property type="molecule type" value="Genomic_DNA"/>
</dbReference>
<dbReference type="SMR" id="Q11LK0"/>
<dbReference type="STRING" id="266779.Meso_0321"/>
<dbReference type="KEGG" id="mes:Meso_0321"/>
<dbReference type="eggNOG" id="COG0851">
    <property type="taxonomic scope" value="Bacteria"/>
</dbReference>
<dbReference type="HOGENOM" id="CLU_137929_2_1_5"/>
<dbReference type="OrthoDB" id="9802655at2"/>
<dbReference type="GO" id="GO:0051301">
    <property type="term" value="P:cell division"/>
    <property type="evidence" value="ECO:0007669"/>
    <property type="project" value="UniProtKB-KW"/>
</dbReference>
<dbReference type="GO" id="GO:0032955">
    <property type="term" value="P:regulation of division septum assembly"/>
    <property type="evidence" value="ECO:0007669"/>
    <property type="project" value="InterPro"/>
</dbReference>
<dbReference type="Gene3D" id="3.30.1070.10">
    <property type="entry name" value="Cell division topological specificity factor MinE"/>
    <property type="match status" value="1"/>
</dbReference>
<dbReference type="HAMAP" id="MF_00262">
    <property type="entry name" value="MinE"/>
    <property type="match status" value="1"/>
</dbReference>
<dbReference type="InterPro" id="IPR005527">
    <property type="entry name" value="MinE"/>
</dbReference>
<dbReference type="InterPro" id="IPR036707">
    <property type="entry name" value="MinE_sf"/>
</dbReference>
<dbReference type="NCBIfam" id="TIGR01215">
    <property type="entry name" value="minE"/>
    <property type="match status" value="1"/>
</dbReference>
<dbReference type="NCBIfam" id="NF001422">
    <property type="entry name" value="PRK00296.1"/>
    <property type="match status" value="1"/>
</dbReference>
<dbReference type="Pfam" id="PF03776">
    <property type="entry name" value="MinE"/>
    <property type="match status" value="1"/>
</dbReference>
<dbReference type="SUPFAM" id="SSF55229">
    <property type="entry name" value="Cell division protein MinE topological specificity domain"/>
    <property type="match status" value="1"/>
</dbReference>